<feature type="chain" id="PRO_0000066825" description="Toxin Tst2">
    <location>
        <begin position="1"/>
        <end position="62"/>
    </location>
</feature>
<feature type="domain" description="LCN-type CS-alpha/beta" evidence="3">
    <location>
        <begin position="1"/>
        <end position="62"/>
    </location>
</feature>
<feature type="modified residue" description="Cysteine amide" evidence="2">
    <location>
        <position position="62"/>
    </location>
</feature>
<feature type="disulfide bond" evidence="3">
    <location>
        <begin position="11"/>
        <end position="62"/>
    </location>
</feature>
<feature type="disulfide bond" evidence="3">
    <location>
        <begin position="15"/>
        <end position="38"/>
    </location>
</feature>
<feature type="disulfide bond" evidence="3">
    <location>
        <begin position="23"/>
        <end position="43"/>
    </location>
</feature>
<feature type="disulfide bond" evidence="3">
    <location>
        <begin position="27"/>
        <end position="45"/>
    </location>
</feature>
<evidence type="ECO:0000250" key="1"/>
<evidence type="ECO:0000250" key="2">
    <source>
        <dbReference type="UniProtKB" id="P56612"/>
    </source>
</evidence>
<evidence type="ECO:0000255" key="3">
    <source>
        <dbReference type="PROSITE-ProRule" id="PRU01210"/>
    </source>
</evidence>
<evidence type="ECO:0000269" key="4">
    <source>
    </source>
</evidence>
<evidence type="ECO:0000269" key="5">
    <source>
    </source>
</evidence>
<evidence type="ECO:0000305" key="6"/>
<keyword id="KW-0027">Amidation</keyword>
<keyword id="KW-0903">Direct protein sequencing</keyword>
<keyword id="KW-1015">Disulfide bond</keyword>
<keyword id="KW-0872">Ion channel impairing toxin</keyword>
<keyword id="KW-0528">Neurotoxin</keyword>
<keyword id="KW-0964">Secreted</keyword>
<keyword id="KW-0800">Toxin</keyword>
<keyword id="KW-0738">Voltage-gated sodium channel impairing toxin</keyword>
<sequence length="62" mass="6998">KEGYAMDHEGCKFSCFIRPAGFCDGYCKTHLKASSGYCAWPACYCYGVPDHIKVWDYATNKC</sequence>
<dbReference type="PIR" id="S62866">
    <property type="entry name" value="S62866"/>
</dbReference>
<dbReference type="SMR" id="P68411"/>
<dbReference type="GO" id="GO:0005576">
    <property type="term" value="C:extracellular region"/>
    <property type="evidence" value="ECO:0007669"/>
    <property type="project" value="UniProtKB-SubCell"/>
</dbReference>
<dbReference type="GO" id="GO:0019871">
    <property type="term" value="F:sodium channel inhibitor activity"/>
    <property type="evidence" value="ECO:0007669"/>
    <property type="project" value="InterPro"/>
</dbReference>
<dbReference type="GO" id="GO:0090729">
    <property type="term" value="F:toxin activity"/>
    <property type="evidence" value="ECO:0007669"/>
    <property type="project" value="UniProtKB-KW"/>
</dbReference>
<dbReference type="GO" id="GO:0006952">
    <property type="term" value="P:defense response"/>
    <property type="evidence" value="ECO:0007669"/>
    <property type="project" value="InterPro"/>
</dbReference>
<dbReference type="CDD" id="cd23106">
    <property type="entry name" value="neurotoxins_LC_scorpion"/>
    <property type="match status" value="1"/>
</dbReference>
<dbReference type="FunFam" id="3.30.30.10:FF:000002">
    <property type="entry name" value="Alpha-like toxin BmK-M1"/>
    <property type="match status" value="1"/>
</dbReference>
<dbReference type="Gene3D" id="3.30.30.10">
    <property type="entry name" value="Knottin, scorpion toxin-like"/>
    <property type="match status" value="1"/>
</dbReference>
<dbReference type="InterPro" id="IPR044062">
    <property type="entry name" value="LCN-type_CS_alpha_beta_dom"/>
</dbReference>
<dbReference type="InterPro" id="IPR003614">
    <property type="entry name" value="Scorpion_toxin-like"/>
</dbReference>
<dbReference type="InterPro" id="IPR036574">
    <property type="entry name" value="Scorpion_toxin-like_sf"/>
</dbReference>
<dbReference type="InterPro" id="IPR018218">
    <property type="entry name" value="Scorpion_toxinL"/>
</dbReference>
<dbReference type="InterPro" id="IPR002061">
    <property type="entry name" value="Scorpion_toxinL/defensin"/>
</dbReference>
<dbReference type="Pfam" id="PF00537">
    <property type="entry name" value="Toxin_3"/>
    <property type="match status" value="1"/>
</dbReference>
<dbReference type="PRINTS" id="PR00285">
    <property type="entry name" value="SCORPNTOXIN"/>
</dbReference>
<dbReference type="SMART" id="SM00505">
    <property type="entry name" value="Knot1"/>
    <property type="match status" value="1"/>
</dbReference>
<dbReference type="SUPFAM" id="SSF57095">
    <property type="entry name" value="Scorpion toxin-like"/>
    <property type="match status" value="1"/>
</dbReference>
<dbReference type="PROSITE" id="PS51863">
    <property type="entry name" value="LCN_CSAB"/>
    <property type="match status" value="1"/>
</dbReference>
<proteinExistence type="evidence at protein level"/>
<organism>
    <name type="scientific">Tityus stigmurus</name>
    <name type="common">Brazilian scorpion</name>
    <dbReference type="NCBI Taxonomy" id="50344"/>
    <lineage>
        <taxon>Eukaryota</taxon>
        <taxon>Metazoa</taxon>
        <taxon>Ecdysozoa</taxon>
        <taxon>Arthropoda</taxon>
        <taxon>Chelicerata</taxon>
        <taxon>Arachnida</taxon>
        <taxon>Scorpiones</taxon>
        <taxon>Buthida</taxon>
        <taxon>Buthoidea</taxon>
        <taxon>Buthidae</taxon>
        <taxon>Tityus</taxon>
    </lineage>
</organism>
<name>SCX2_TITST</name>
<reference key="1">
    <citation type="journal article" date="1996" name="Biochem. J.">
        <title>Toxic peptides and genes encoding toxin gamma of the Brazilian scorpions Tityus bahiensis and Tityus stigmurus.</title>
        <authorList>
            <person name="Becerril B."/>
            <person name="Corona M."/>
            <person name="Coronas F.I."/>
            <person name="Zamudio F.Z."/>
            <person name="Calderon-Aranda E.S."/>
            <person name="Fletcher P.L. Jr."/>
            <person name="Martin B.M."/>
            <person name="Possani L.D."/>
        </authorList>
    </citation>
    <scope>PROTEIN SEQUENCE</scope>
    <scope>BIOASSAY</scope>
    <source>
        <tissue>Venom</tissue>
    </source>
</reference>
<reference key="2">
    <citation type="journal article" date="2007" name="Comp. Biochem. Physiol.">
        <title>Proteomic analysis of the venom from the scorpion Tityus stigmurus: biochemical and physiological comparison with other Tityus species.</title>
        <authorList>
            <person name="Batista C.V.F."/>
            <person name="Roman-Gonzalez S.A."/>
            <person name="Salas-Castillo S.P."/>
            <person name="Zamudio F.Z."/>
            <person name="Gomez-Lagunas F."/>
            <person name="Possani L.D."/>
        </authorList>
    </citation>
    <scope>PROTEIN SEQUENCE</scope>
    <scope>MASS SPECTROMETRY</scope>
    <source>
        <tissue>Venom</tissue>
    </source>
</reference>
<reference key="3">
    <citation type="journal article" date="2012" name="PLoS ONE">
        <title>Identification and phylogenetic analysis of Tityus pachyurus and Tityus obscurus novel putative Na+-channel scorpion toxins.</title>
        <authorList>
            <person name="Guerrero-Vargas J.A."/>
            <person name="Mourao C.B."/>
            <person name="Quintero-Hernandez V."/>
            <person name="Possani L.D."/>
            <person name="Schwartz E.F."/>
        </authorList>
    </citation>
    <scope>NOMENCLATURE</scope>
</reference>
<accession>P68411</accession>
<accession>P23814</accession>
<protein>
    <recommendedName>
        <fullName>Toxin Tst2</fullName>
    </recommendedName>
    <alternativeName>
        <fullName>P-Mice-beta* NaTx5.2</fullName>
    </alternativeName>
    <alternativeName>
        <fullName>Tityustoxin II</fullName>
        <shortName>TsTX-II</shortName>
    </alternativeName>
    <alternativeName>
        <fullName>Toxin III-8</fullName>
    </alternativeName>
</protein>
<comment type="function">
    <text evidence="1 5">Alpha toxins bind voltage-independently at site-3 of sodium channels (Nav) and inhibit the inactivation of the activated channels, thereby blocking neuronal transmission (By similarity). Is toxic to mice (PubMed:8611151).</text>
</comment>
<comment type="subcellular location">
    <subcellularLocation>
        <location>Secreted</location>
    </subcellularLocation>
</comment>
<comment type="tissue specificity">
    <text>Expressed by the venom gland.</text>
</comment>
<comment type="domain">
    <text evidence="6">Has the structural arrangement of an alpha-helix connected to antiparallel beta-sheets by disulfide bonds (CS-alpha/beta).</text>
</comment>
<comment type="mass spectrometry" mass="6989.2" method="Electrospray" evidence="4"/>
<comment type="similarity">
    <text evidence="6">Belongs to the long (4 C-C) scorpion toxin superfamily. Sodium channel inhibitor family. Beta subfamily.</text>
</comment>
<comment type="caution">
    <text evidence="6">This toxin is functionally similar to alpha toxins and structurally similar to beta toxins.</text>
</comment>